<reference key="1">
    <citation type="journal article" date="1995" name="Science">
        <title>Whole-genome random sequencing and assembly of Haemophilus influenzae Rd.</title>
        <authorList>
            <person name="Fleischmann R.D."/>
            <person name="Adams M.D."/>
            <person name="White O."/>
            <person name="Clayton R.A."/>
            <person name="Kirkness E.F."/>
            <person name="Kerlavage A.R."/>
            <person name="Bult C.J."/>
            <person name="Tomb J.-F."/>
            <person name="Dougherty B.A."/>
            <person name="Merrick J.M."/>
            <person name="McKenney K."/>
            <person name="Sutton G.G."/>
            <person name="FitzHugh W."/>
            <person name="Fields C.A."/>
            <person name="Gocayne J.D."/>
            <person name="Scott J.D."/>
            <person name="Shirley R."/>
            <person name="Liu L.-I."/>
            <person name="Glodek A."/>
            <person name="Kelley J.M."/>
            <person name="Weidman J.F."/>
            <person name="Phillips C.A."/>
            <person name="Spriggs T."/>
            <person name="Hedblom E."/>
            <person name="Cotton M.D."/>
            <person name="Utterback T.R."/>
            <person name="Hanna M.C."/>
            <person name="Nguyen D.T."/>
            <person name="Saudek D.M."/>
            <person name="Brandon R.C."/>
            <person name="Fine L.D."/>
            <person name="Fritchman J.L."/>
            <person name="Fuhrmann J.L."/>
            <person name="Geoghagen N.S.M."/>
            <person name="Gnehm C.L."/>
            <person name="McDonald L.A."/>
            <person name="Small K.V."/>
            <person name="Fraser C.M."/>
            <person name="Smith H.O."/>
            <person name="Venter J.C."/>
        </authorList>
    </citation>
    <scope>NUCLEOTIDE SEQUENCE [LARGE SCALE GENOMIC DNA]</scope>
    <source>
        <strain>ATCC 51907 / DSM 11121 / KW20 / Rd</strain>
    </source>
</reference>
<reference key="2">
    <citation type="submission" date="1996-09" db="EMBL/GenBank/DDBJ databases">
        <authorList>
            <person name="White O."/>
            <person name="Clayton R.A."/>
            <person name="Kerlavage A.R."/>
            <person name="Fleischmann R.D."/>
        </authorList>
    </citation>
    <scope>SEQUENCE REVISION</scope>
</reference>
<keyword id="KW-0067">ATP-binding</keyword>
<keyword id="KW-1003">Cell membrane</keyword>
<keyword id="KW-0460">Magnesium</keyword>
<keyword id="KW-0472">Membrane</keyword>
<keyword id="KW-0479">Metal-binding</keyword>
<keyword id="KW-0547">Nucleotide-binding</keyword>
<keyword id="KW-0597">Phosphoprotein</keyword>
<keyword id="KW-1185">Reference proteome</keyword>
<keyword id="KW-1278">Translocase</keyword>
<keyword id="KW-0812">Transmembrane</keyword>
<keyword id="KW-1133">Transmembrane helix</keyword>
<accession>P77868</accession>
<dbReference type="EC" id="7.2.2.-"/>
<dbReference type="EMBL" id="L42023">
    <property type="protein sequence ID" value="AAC21955.1"/>
    <property type="molecule type" value="Genomic_DNA"/>
</dbReference>
<dbReference type="RefSeq" id="NP_438457.1">
    <property type="nucleotide sequence ID" value="NC_000907.1"/>
</dbReference>
<dbReference type="STRING" id="71421.HI_0290"/>
<dbReference type="EnsemblBacteria" id="AAC21955">
    <property type="protein sequence ID" value="AAC21955"/>
    <property type="gene ID" value="HI_0290"/>
</dbReference>
<dbReference type="KEGG" id="hin:HI_0290"/>
<dbReference type="PATRIC" id="fig|71421.8.peg.306"/>
<dbReference type="eggNOG" id="COG2217">
    <property type="taxonomic scope" value="Bacteria"/>
</dbReference>
<dbReference type="HOGENOM" id="CLU_001771_11_2_6"/>
<dbReference type="OrthoDB" id="9814270at2"/>
<dbReference type="PhylomeDB" id="P77868"/>
<dbReference type="BioCyc" id="HINF71421:G1GJ1-308-MONOMER"/>
<dbReference type="Proteomes" id="UP000000579">
    <property type="component" value="Chromosome"/>
</dbReference>
<dbReference type="GO" id="GO:0016020">
    <property type="term" value="C:membrane"/>
    <property type="evidence" value="ECO:0000318"/>
    <property type="project" value="GO_Central"/>
</dbReference>
<dbReference type="GO" id="GO:0005886">
    <property type="term" value="C:plasma membrane"/>
    <property type="evidence" value="ECO:0007669"/>
    <property type="project" value="UniProtKB-SubCell"/>
</dbReference>
<dbReference type="GO" id="GO:0005524">
    <property type="term" value="F:ATP binding"/>
    <property type="evidence" value="ECO:0007669"/>
    <property type="project" value="UniProtKB-KW"/>
</dbReference>
<dbReference type="GO" id="GO:0016887">
    <property type="term" value="F:ATP hydrolysis activity"/>
    <property type="evidence" value="ECO:0007669"/>
    <property type="project" value="InterPro"/>
</dbReference>
<dbReference type="GO" id="GO:0005507">
    <property type="term" value="F:copper ion binding"/>
    <property type="evidence" value="ECO:0000318"/>
    <property type="project" value="GO_Central"/>
</dbReference>
<dbReference type="GO" id="GO:0043682">
    <property type="term" value="F:P-type divalent copper transporter activity"/>
    <property type="evidence" value="ECO:0000318"/>
    <property type="project" value="GO_Central"/>
</dbReference>
<dbReference type="GO" id="GO:0055070">
    <property type="term" value="P:copper ion homeostasis"/>
    <property type="evidence" value="ECO:0000318"/>
    <property type="project" value="GO_Central"/>
</dbReference>
<dbReference type="CDD" id="cd00371">
    <property type="entry name" value="HMA"/>
    <property type="match status" value="1"/>
</dbReference>
<dbReference type="CDD" id="cd02094">
    <property type="entry name" value="P-type_ATPase_Cu-like"/>
    <property type="match status" value="1"/>
</dbReference>
<dbReference type="FunFam" id="3.30.70.100:FF:000005">
    <property type="entry name" value="Copper-exporting P-type ATPase A"/>
    <property type="match status" value="1"/>
</dbReference>
<dbReference type="Gene3D" id="3.30.70.100">
    <property type="match status" value="1"/>
</dbReference>
<dbReference type="Gene3D" id="3.40.1110.10">
    <property type="entry name" value="Calcium-transporting ATPase, cytoplasmic domain N"/>
    <property type="match status" value="1"/>
</dbReference>
<dbReference type="Gene3D" id="2.70.150.10">
    <property type="entry name" value="Calcium-transporting ATPase, cytoplasmic transduction domain A"/>
    <property type="match status" value="1"/>
</dbReference>
<dbReference type="Gene3D" id="3.40.50.1000">
    <property type="entry name" value="HAD superfamily/HAD-like"/>
    <property type="match status" value="1"/>
</dbReference>
<dbReference type="InterPro" id="IPR023299">
    <property type="entry name" value="ATPase_P-typ_cyto_dom_N"/>
</dbReference>
<dbReference type="InterPro" id="IPR018303">
    <property type="entry name" value="ATPase_P-typ_P_site"/>
</dbReference>
<dbReference type="InterPro" id="IPR023298">
    <property type="entry name" value="ATPase_P-typ_TM_dom_sf"/>
</dbReference>
<dbReference type="InterPro" id="IPR008250">
    <property type="entry name" value="ATPase_P-typ_transduc_dom_A_sf"/>
</dbReference>
<dbReference type="InterPro" id="IPR036412">
    <property type="entry name" value="HAD-like_sf"/>
</dbReference>
<dbReference type="InterPro" id="IPR023214">
    <property type="entry name" value="HAD_sf"/>
</dbReference>
<dbReference type="InterPro" id="IPR017969">
    <property type="entry name" value="Heavy-metal-associated_CS"/>
</dbReference>
<dbReference type="InterPro" id="IPR006121">
    <property type="entry name" value="HMA_dom"/>
</dbReference>
<dbReference type="InterPro" id="IPR036163">
    <property type="entry name" value="HMA_dom_sf"/>
</dbReference>
<dbReference type="InterPro" id="IPR027256">
    <property type="entry name" value="P-typ_ATPase_IB"/>
</dbReference>
<dbReference type="InterPro" id="IPR001757">
    <property type="entry name" value="P_typ_ATPase"/>
</dbReference>
<dbReference type="InterPro" id="IPR044492">
    <property type="entry name" value="P_typ_ATPase_HD_dom"/>
</dbReference>
<dbReference type="NCBIfam" id="TIGR01511">
    <property type="entry name" value="ATPase-IB1_Cu"/>
    <property type="match status" value="1"/>
</dbReference>
<dbReference type="NCBIfam" id="TIGR01525">
    <property type="entry name" value="ATPase-IB_hvy"/>
    <property type="match status" value="1"/>
</dbReference>
<dbReference type="NCBIfam" id="TIGR01494">
    <property type="entry name" value="ATPase_P-type"/>
    <property type="match status" value="1"/>
</dbReference>
<dbReference type="PANTHER" id="PTHR43520">
    <property type="entry name" value="ATP7, ISOFORM B"/>
    <property type="match status" value="1"/>
</dbReference>
<dbReference type="PANTHER" id="PTHR43520:SF8">
    <property type="entry name" value="P-TYPE CU(+) TRANSPORTER"/>
    <property type="match status" value="1"/>
</dbReference>
<dbReference type="Pfam" id="PF00122">
    <property type="entry name" value="E1-E2_ATPase"/>
    <property type="match status" value="1"/>
</dbReference>
<dbReference type="Pfam" id="PF00403">
    <property type="entry name" value="HMA"/>
    <property type="match status" value="1"/>
</dbReference>
<dbReference type="Pfam" id="PF00702">
    <property type="entry name" value="Hydrolase"/>
    <property type="match status" value="1"/>
</dbReference>
<dbReference type="PRINTS" id="PR00119">
    <property type="entry name" value="CATATPASE"/>
</dbReference>
<dbReference type="PRINTS" id="PR00943">
    <property type="entry name" value="CUATPASE"/>
</dbReference>
<dbReference type="SFLD" id="SFLDS00003">
    <property type="entry name" value="Haloacid_Dehalogenase"/>
    <property type="match status" value="1"/>
</dbReference>
<dbReference type="SFLD" id="SFLDF00027">
    <property type="entry name" value="p-type_atpase"/>
    <property type="match status" value="1"/>
</dbReference>
<dbReference type="SUPFAM" id="SSF81653">
    <property type="entry name" value="Calcium ATPase, transduction domain A"/>
    <property type="match status" value="1"/>
</dbReference>
<dbReference type="SUPFAM" id="SSF81665">
    <property type="entry name" value="Calcium ATPase, transmembrane domain M"/>
    <property type="match status" value="1"/>
</dbReference>
<dbReference type="SUPFAM" id="SSF56784">
    <property type="entry name" value="HAD-like"/>
    <property type="match status" value="1"/>
</dbReference>
<dbReference type="SUPFAM" id="SSF55008">
    <property type="entry name" value="HMA, heavy metal-associated domain"/>
    <property type="match status" value="1"/>
</dbReference>
<dbReference type="SUPFAM" id="SSF81660">
    <property type="entry name" value="Metal cation-transporting ATPase, ATP-binding domain N"/>
    <property type="match status" value="1"/>
</dbReference>
<dbReference type="PROSITE" id="PS00154">
    <property type="entry name" value="ATPASE_E1_E2"/>
    <property type="match status" value="1"/>
</dbReference>
<dbReference type="PROSITE" id="PS01047">
    <property type="entry name" value="HMA_1"/>
    <property type="match status" value="1"/>
</dbReference>
<dbReference type="PROSITE" id="PS50846">
    <property type="entry name" value="HMA_2"/>
    <property type="match status" value="1"/>
</dbReference>
<name>Y290_HAEIN</name>
<gene>
    <name type="ordered locus">HI_0290</name>
</gene>
<evidence type="ECO:0000250" key="1"/>
<evidence type="ECO:0000255" key="2"/>
<evidence type="ECO:0000255" key="3">
    <source>
        <dbReference type="PROSITE-ProRule" id="PRU00280"/>
    </source>
</evidence>
<evidence type="ECO:0000305" key="4"/>
<proteinExistence type="inferred from homology"/>
<organism>
    <name type="scientific">Haemophilus influenzae (strain ATCC 51907 / DSM 11121 / KW20 / Rd)</name>
    <dbReference type="NCBI Taxonomy" id="71421"/>
    <lineage>
        <taxon>Bacteria</taxon>
        <taxon>Pseudomonadati</taxon>
        <taxon>Pseudomonadota</taxon>
        <taxon>Gammaproteobacteria</taxon>
        <taxon>Pasteurellales</taxon>
        <taxon>Pasteurellaceae</taxon>
        <taxon>Haemophilus</taxon>
    </lineage>
</organism>
<comment type="catalytic activity">
    <reaction>
        <text>ATP + H2O = ADP + phosphate + H(+)</text>
        <dbReference type="Rhea" id="RHEA:13065"/>
        <dbReference type="ChEBI" id="CHEBI:15377"/>
        <dbReference type="ChEBI" id="CHEBI:15378"/>
        <dbReference type="ChEBI" id="CHEBI:30616"/>
        <dbReference type="ChEBI" id="CHEBI:43474"/>
        <dbReference type="ChEBI" id="CHEBI:456216"/>
    </reaction>
</comment>
<comment type="subcellular location">
    <subcellularLocation>
        <location>Cell membrane</location>
        <topology>Multi-pass membrane protein</topology>
    </subcellularLocation>
</comment>
<comment type="similarity">
    <text evidence="4">Belongs to the cation transport ATPase (P-type) (TC 3.A.3) family. Type IB subfamily.</text>
</comment>
<sequence>MLDLTPQSKKISIQIGGMTCQSCANRIEKVLNKKPFVQQAGVNFAAEEAQVVFDATQASEAQIIEIIHKTGFSAHIKQANELPIEENTSIPWRLIVLWIINIPFLIGMLGMIGGSHNLMLPPIWQFALASIVQLWLAIPFYRGAIGSIRGGLTNMDVLVSTGTLTIYLYSAFMLFYHANHAMGHVYFEASVMVIGFVSLGKFLEDRTKKHSLNSLSMLLQLTPKKVTVLRNEKWIEIALDQVNIGEIIRANQGERIAADGVIESGNGWCDESHLTGESRPEEKQKGGKVLAGAMVTEGSIIYRANQLGSQTLLGDMMNALSDAQGSKAPIARFADKVTSVFVPVVLVISLVTFALTYILTNDSVSSLIHAVSVLVIACPCALGLATPAAIMVGLGKAVNAGVWFKDAAAMEETAHVDTVVLDKTGTLTKGELEISALWQPQSAVYSEDDLYRFAAAVERQANHPIAKAIVQAAEXKMLEIPTALFSKMEVGQGIQAELEQVGTIKVGKPDYCGLILPKNLEDIWQIASIVAVSINDEPIGAFALTDTLKNDSLHAIQRLQQQNIDVVIMSGDQQSVVDYIAKQLGIKKAFGKLTPRDKAEQIQKLKDLGHIVAMVGDGINDAPALASANVSFAMKSSSDIAEQTASATLMQHSVNQLVDALFIARATLKNIKQNLFFALIYNILGIPLAAFGFLSPIIAGAAMALSSISVLMNALRLKKVRF</sequence>
<protein>
    <recommendedName>
        <fullName>Probable cation-transporting ATPase HI_0290</fullName>
        <ecNumber>7.2.2.-</ecNumber>
    </recommendedName>
</protein>
<feature type="chain" id="PRO_0000046334" description="Probable cation-transporting ATPase HI_0290">
    <location>
        <begin position="1"/>
        <end position="722"/>
    </location>
</feature>
<feature type="transmembrane region" description="Helical" evidence="2">
    <location>
        <begin position="94"/>
        <end position="114"/>
    </location>
</feature>
<feature type="transmembrane region" description="Helical" evidence="2">
    <location>
        <begin position="118"/>
        <end position="138"/>
    </location>
</feature>
<feature type="transmembrane region" description="Helical" evidence="2">
    <location>
        <begin position="157"/>
        <end position="177"/>
    </location>
</feature>
<feature type="transmembrane region" description="Helical" evidence="2">
    <location>
        <begin position="180"/>
        <end position="200"/>
    </location>
</feature>
<feature type="transmembrane region" description="Helical" evidence="2">
    <location>
        <begin position="340"/>
        <end position="360"/>
    </location>
</feature>
<feature type="transmembrane region" description="Helical" evidence="2">
    <location>
        <begin position="373"/>
        <end position="393"/>
    </location>
</feature>
<feature type="transmembrane region" description="Helical" evidence="2">
    <location>
        <begin position="523"/>
        <end position="543"/>
    </location>
</feature>
<feature type="transmembrane region" description="Helical" evidence="2">
    <location>
        <begin position="608"/>
        <end position="628"/>
    </location>
</feature>
<feature type="transmembrane region" description="Helical" evidence="2">
    <location>
        <begin position="675"/>
        <end position="695"/>
    </location>
</feature>
<feature type="transmembrane region" description="Helical" evidence="2">
    <location>
        <begin position="697"/>
        <end position="717"/>
    </location>
</feature>
<feature type="domain" description="HMA" evidence="3">
    <location>
        <begin position="9"/>
        <end position="75"/>
    </location>
</feature>
<feature type="active site" description="4-aspartylphosphate intermediate" evidence="1">
    <location>
        <position position="422"/>
    </location>
</feature>
<feature type="binding site" evidence="3">
    <location>
        <position position="20"/>
    </location>
    <ligand>
        <name>a metal cation</name>
        <dbReference type="ChEBI" id="CHEBI:25213"/>
    </ligand>
</feature>
<feature type="binding site" evidence="3">
    <location>
        <position position="23"/>
    </location>
    <ligand>
        <name>a metal cation</name>
        <dbReference type="ChEBI" id="CHEBI:25213"/>
    </ligand>
</feature>
<feature type="binding site">
    <location>
        <position position="617"/>
    </location>
    <ligand>
        <name>Mg(2+)</name>
        <dbReference type="ChEBI" id="CHEBI:18420"/>
    </ligand>
</feature>
<feature type="binding site">
    <location>
        <position position="621"/>
    </location>
    <ligand>
        <name>Mg(2+)</name>
        <dbReference type="ChEBI" id="CHEBI:18420"/>
    </ligand>
</feature>